<sequence length="410" mass="44825">MTVFSALLLAGVLSALALAVGGAVGMRLTSRVVEQRQRVATEWSGITVSQMLQCIVTLMPLGAAVVDTHRDVVYLNERAKELGLVRDRQLDDQAWRAARQALGGEDVEFDLSPRKRSATGRSGLSVHGHARLLSEEDRRFAVVFVHDQSDYARMEAARRDFVANVSHELKTPVGAMALLAEALLASADDSETVRRFAEKVLIEANRLGDMVAELIELSRLQGAERLPNMTDVDVDTIVSEAISRHKVAADNADIEVRTDAPSNLRVLGDQTLLVTALANLVSNAIAYSPRGSLVSISRRRRGANIEIAVTDRGIGIAPEDQERVFERFFRGDKARSRATGGSGLGLAIVKHVAANHDGTIRVWSKPGTGSTFTLALPALIEAYHDDERPEQAREPELRSNRSQREEELSR</sequence>
<gene>
    <name evidence="11" type="primary">senX3</name>
    <name type="ordered locus">Rv0490</name>
    <name type="ORF">MTCY20G9.16</name>
</gene>
<evidence type="ECO:0000250" key="1">
    <source>
        <dbReference type="UniProtKB" id="P0A601"/>
    </source>
</evidence>
<evidence type="ECO:0000255" key="2"/>
<evidence type="ECO:0000255" key="3">
    <source>
        <dbReference type="PROSITE-ProRule" id="PRU00107"/>
    </source>
</evidence>
<evidence type="ECO:0000256" key="4">
    <source>
        <dbReference type="SAM" id="MobiDB-lite"/>
    </source>
</evidence>
<evidence type="ECO:0000269" key="5">
    <source>
    </source>
</evidence>
<evidence type="ECO:0000269" key="6">
    <source>
    </source>
</evidence>
<evidence type="ECO:0000269" key="7">
    <source>
    </source>
</evidence>
<evidence type="ECO:0000269" key="8">
    <source>
    </source>
</evidence>
<evidence type="ECO:0000269" key="9">
    <source>
    </source>
</evidence>
<evidence type="ECO:0000269" key="10">
    <source>
    </source>
</evidence>
<evidence type="ECO:0000303" key="11">
    <source>
    </source>
</evidence>
<evidence type="ECO:0000305" key="12"/>
<organism>
    <name type="scientific">Mycobacterium tuberculosis (strain ATCC 25618 / H37Rv)</name>
    <dbReference type="NCBI Taxonomy" id="83332"/>
    <lineage>
        <taxon>Bacteria</taxon>
        <taxon>Bacillati</taxon>
        <taxon>Actinomycetota</taxon>
        <taxon>Actinomycetes</taxon>
        <taxon>Mycobacteriales</taxon>
        <taxon>Mycobacteriaceae</taxon>
        <taxon>Mycobacterium</taxon>
        <taxon>Mycobacterium tuberculosis complex</taxon>
    </lineage>
</organism>
<protein>
    <recommendedName>
        <fullName evidence="12">Sensor-like histidine kinase SenX3</fullName>
        <ecNumber evidence="1">2.7.13.3</ecNumber>
    </recommendedName>
</protein>
<name>SENX3_MYCTU</name>
<accession>P9WGK5</accession>
<accession>L0T5I7</accession>
<accession>O07129</accession>
<accession>P0A600</accession>
<accession>Q11155</accession>
<reference key="1">
    <citation type="journal article" date="1997" name="Mol. Microbiol.">
        <title>Identification of novel intergenic repetitive units in a mycobacterial two-component system operon.</title>
        <authorList>
            <person name="Supply P."/>
            <person name="Magdalena J."/>
            <person name="Himpens S."/>
            <person name="Locht C."/>
        </authorList>
    </citation>
    <scope>NUCLEOTIDE SEQUENCE [GENOMIC DNA]</scope>
    <scope>OPERON</scope>
    <source>
        <strain>2296207</strain>
    </source>
</reference>
<reference key="2">
    <citation type="journal article" date="1998" name="Nature">
        <title>Deciphering the biology of Mycobacterium tuberculosis from the complete genome sequence.</title>
        <authorList>
            <person name="Cole S.T."/>
            <person name="Brosch R."/>
            <person name="Parkhill J."/>
            <person name="Garnier T."/>
            <person name="Churcher C.M."/>
            <person name="Harris D.E."/>
            <person name="Gordon S.V."/>
            <person name="Eiglmeier K."/>
            <person name="Gas S."/>
            <person name="Barry C.E. III"/>
            <person name="Tekaia F."/>
            <person name="Badcock K."/>
            <person name="Basham D."/>
            <person name="Brown D."/>
            <person name="Chillingworth T."/>
            <person name="Connor R."/>
            <person name="Davies R.M."/>
            <person name="Devlin K."/>
            <person name="Feltwell T."/>
            <person name="Gentles S."/>
            <person name="Hamlin N."/>
            <person name="Holroyd S."/>
            <person name="Hornsby T."/>
            <person name="Jagels K."/>
            <person name="Krogh A."/>
            <person name="McLean J."/>
            <person name="Moule S."/>
            <person name="Murphy L.D."/>
            <person name="Oliver S."/>
            <person name="Osborne J."/>
            <person name="Quail M.A."/>
            <person name="Rajandream M.A."/>
            <person name="Rogers J."/>
            <person name="Rutter S."/>
            <person name="Seeger K."/>
            <person name="Skelton S."/>
            <person name="Squares S."/>
            <person name="Squares R."/>
            <person name="Sulston J.E."/>
            <person name="Taylor K."/>
            <person name="Whitehead S."/>
            <person name="Barrell B.G."/>
        </authorList>
    </citation>
    <scope>NUCLEOTIDE SEQUENCE [LARGE SCALE GENOMIC DNA]</scope>
    <source>
        <strain>ATCC 25618 / H37Rv</strain>
    </source>
</reference>
<reference key="3">
    <citation type="journal article" date="2003" name="Microbiology">
        <title>The senX3-regX3 two-component regulatory system of Mycobacterium tuberculosis is required for virulence.</title>
        <authorList>
            <person name="Parish T."/>
            <person name="Smith D.A."/>
            <person name="Roberts G."/>
            <person name="Betts J."/>
            <person name="Stoker N.G."/>
        </authorList>
    </citation>
    <scope>FUNCTION</scope>
    <scope>DISRUPTION PHENOTYPE</scope>
    <source>
        <strain>H37Rv</strain>
    </source>
</reference>
<reference key="4">
    <citation type="journal article" date="2011" name="Mol. Cell. Proteomics">
        <title>Proteogenomic analysis of Mycobacterium tuberculosis by high resolution mass spectrometry.</title>
        <authorList>
            <person name="Kelkar D.S."/>
            <person name="Kumar D."/>
            <person name="Kumar P."/>
            <person name="Balakrishnan L."/>
            <person name="Muthusamy B."/>
            <person name="Yadav A.K."/>
            <person name="Shrivastava P."/>
            <person name="Marimuthu A."/>
            <person name="Anand S."/>
            <person name="Sundaram H."/>
            <person name="Kingsbury R."/>
            <person name="Harsha H.C."/>
            <person name="Nair B."/>
            <person name="Prasad T.S."/>
            <person name="Chauhan D.S."/>
            <person name="Katoch K."/>
            <person name="Katoch V.M."/>
            <person name="Kumar P."/>
            <person name="Chaerkady R."/>
            <person name="Ramachandran S."/>
            <person name="Dash D."/>
            <person name="Pandey A."/>
        </authorList>
    </citation>
    <scope>IDENTIFICATION BY MASS SPECTROMETRY [LARGE SCALE ANALYSIS]</scope>
    <source>
        <strain>ATCC 25618 / H37Rv</strain>
    </source>
</reference>
<reference key="5">
    <citation type="journal article" date="2011" name="PLoS ONE">
        <title>Control of CydB and GltA1 expression by the SenX3 RegX3 two component regulatory system of Mycobacterium tuberculosis.</title>
        <authorList>
            <person name="Roberts G."/>
            <person name="Vadrevu I.S."/>
            <person name="Madiraju M.V."/>
            <person name="Parish T."/>
        </authorList>
    </citation>
    <scope>FUNCTION</scope>
    <source>
        <strain>H37Rv</strain>
    </source>
</reference>
<reference key="6">
    <citation type="journal article" date="2013" name="Mol. Med. Report.">
        <title>Expression and purification of SenX3 from the Mycobacterium tuberculosis strain H37Rv in Escherichia coli.</title>
        <authorList>
            <person name="Lv H."/>
            <person name="Hu L."/>
            <person name="Hu Q."/>
            <person name="Wei Q."/>
            <person name="Shen P."/>
        </authorList>
    </citation>
    <scope>EXPRESSION</scope>
    <scope>PURIFICATION</scope>
    <source>
        <strain>H37Rv</strain>
    </source>
</reference>
<reference key="7">
    <citation type="journal article" date="2015" name="Antioxid. Redox Signal.">
        <title>Virulence factor SenX3 is the oxygen-controlled replication switch of Mycobacterium tuberculosis.</title>
        <authorList>
            <person name="Singh N."/>
            <person name="Kumar A."/>
        </authorList>
    </citation>
    <scope>FUNCTION IN THE REACTIVATION OF MTB</scope>
    <scope>ACTIVITY REGULATION</scope>
    <source>
        <strain>H37Rv</strain>
    </source>
</reference>
<reference key="8">
    <citation type="journal article" date="2017" name="MBio">
        <title>Mycobacterium tuberculosis PhoY proteins promote persister formation by mediating Pst/SenX3-RegX3 phosphate sensing.</title>
        <authorList>
            <person name="Namugenyi S.B."/>
            <person name="Aagesen A.M."/>
            <person name="Elliott S.R."/>
            <person name="Tischler A.D."/>
        </authorList>
    </citation>
    <scope>FUNCTION</scope>
    <scope>ACTIVITY REGULATION</scope>
    <source>
        <strain>Erdman</strain>
    </source>
</reference>
<reference key="9">
    <citation type="journal article" date="2022" name="Microbiology">
        <title>A systems approach to decipher a role of transcription factor RegX3 in the adaptation of Mycobacterium tuberculosis to hypoxic stress.</title>
        <authorList>
            <person name="Mahatha A.C."/>
            <person name="Banerjee S.K."/>
            <person name="Ghosh A."/>
            <person name="Lata S."/>
            <person name="Saha S."/>
            <person name="Basu J."/>
            <person name="Kundu M."/>
        </authorList>
    </citation>
    <scope>FUNCTION</scope>
    <scope>INDUCTION</scope>
    <source>
        <strain>H37Rv</strain>
    </source>
</reference>
<feature type="chain" id="PRO_0000074876" description="Sensor-like histidine kinase SenX3">
    <location>
        <begin position="1"/>
        <end position="410"/>
    </location>
</feature>
<feature type="transmembrane region" description="Helical" evidence="2">
    <location>
        <begin position="6"/>
        <end position="26"/>
    </location>
</feature>
<feature type="transmembrane region" description="Helical" evidence="2">
    <location>
        <begin position="46"/>
        <end position="66"/>
    </location>
</feature>
<feature type="domain" description="Histidine kinase" evidence="3">
    <location>
        <begin position="164"/>
        <end position="380"/>
    </location>
</feature>
<feature type="region of interest" description="Disordered" evidence="4">
    <location>
        <begin position="385"/>
        <end position="410"/>
    </location>
</feature>
<feature type="modified residue" description="Phosphohistidine; by autocatalysis" evidence="3">
    <location>
        <position position="167"/>
    </location>
</feature>
<comment type="function">
    <text evidence="1 5 6 7 8 9">Member of the two-component regulatory system SenX3/RegX3 involved in stress response (PubMed:12777483, PubMed:21698211, PubMed:35980355). Autophosphorylates, and then transfers the phosphate group to RegX3 (By similarity). The system is involved in phosphate starvation response (PubMed:28698272). Plays a role in modulating expression of aerobic response and in the regulation of response to hypoxia (PubMed:21698211, PubMed:35980355). Involved in virulence (PubMed:12777483, PubMed:25333974). SenX3 is a key regulator of mycobacterial replication in response to oxygen, nitric oxide (NO) and carbon monoxide (CO), and acts as an O(2) sensor that plays an important role in the reactivation of growth in response to the restoration of aerobic conditions (PubMed:25333974).</text>
</comment>
<comment type="catalytic activity">
    <reaction evidence="1">
        <text>ATP + protein L-histidine = ADP + protein N-phospho-L-histidine.</text>
        <dbReference type="EC" id="2.7.13.3"/>
    </reaction>
</comment>
<comment type="activity regulation">
    <text evidence="7 8">Binds heme and acts as a three-way sensor with three levels of activity (PubMed:25333974). The oxidation of the heme by oxygen leads to the activation of the autokinase activity, whereas the deoxy-ferrous state confers a moderate kinase activity (PubMed:25333974). Kinase activity is strongly inhibited by binding of NO and CO, which lock SenX3 in an inactive state (PubMed:25333974). Activation of the SenX3-RegX3 two-component system is inhibited by PhoY1 and PhoY2 when phosphate is readily available (PubMed:28698272).</text>
</comment>
<comment type="subcellular location">
    <subcellularLocation>
        <location evidence="12">Cell membrane</location>
        <topology evidence="2">Multi-pass membrane protein</topology>
    </subcellularLocation>
</comment>
<comment type="induction">
    <text evidence="9 10">Part of the senX3-regX3 operon (PubMed:9426136). The two genes are separated by a rather long intercistronic region composed of a class of duplicated sequences named mycobacterial interspersed repetitive units (MIRUs) (PubMed:9426136). Significantly up-regulated after 28 days of hypoxia (PubMed:35980355).</text>
</comment>
<comment type="PTM">
    <text evidence="1">Autophosphorylated.</text>
</comment>
<comment type="disruption phenotype">
    <text evidence="5">The senX3-regX3 deletion mutant shows a growth defect after infection of macrophages and is attenuated in both immunodeficient and immunocompetent mice.</text>
</comment>
<proteinExistence type="evidence at protein level"/>
<dbReference type="EC" id="2.7.13.3" evidence="1"/>
<dbReference type="EMBL" id="Y13628">
    <property type="protein sequence ID" value="CAA73957.1"/>
    <property type="molecule type" value="Genomic_DNA"/>
</dbReference>
<dbReference type="EMBL" id="AL123456">
    <property type="protein sequence ID" value="CCP43224.1"/>
    <property type="molecule type" value="Genomic_DNA"/>
</dbReference>
<dbReference type="PIR" id="E70744">
    <property type="entry name" value="E70744"/>
</dbReference>
<dbReference type="RefSeq" id="NP_215004.1">
    <property type="nucleotide sequence ID" value="NC_000962.3"/>
</dbReference>
<dbReference type="RefSeq" id="WP_003402390.1">
    <property type="nucleotide sequence ID" value="NZ_NVQJ01000002.1"/>
</dbReference>
<dbReference type="SMR" id="P9WGK5"/>
<dbReference type="FunCoup" id="P9WGK5">
    <property type="interactions" value="81"/>
</dbReference>
<dbReference type="STRING" id="83332.Rv0490"/>
<dbReference type="PaxDb" id="83332-Rv0490"/>
<dbReference type="DNASU" id="887185"/>
<dbReference type="GeneID" id="45424451"/>
<dbReference type="GeneID" id="887185"/>
<dbReference type="KEGG" id="mtu:Rv0490"/>
<dbReference type="KEGG" id="mtv:RVBD_0490"/>
<dbReference type="PATRIC" id="fig|83332.111.peg.538"/>
<dbReference type="TubercuList" id="Rv0490"/>
<dbReference type="eggNOG" id="COG5002">
    <property type="taxonomic scope" value="Bacteria"/>
</dbReference>
<dbReference type="InParanoid" id="P9WGK5"/>
<dbReference type="OrthoDB" id="9813151at2"/>
<dbReference type="PhylomeDB" id="P9WGK5"/>
<dbReference type="BRENDA" id="2.7.13.3">
    <property type="organism ID" value="3445"/>
</dbReference>
<dbReference type="Proteomes" id="UP000001584">
    <property type="component" value="Chromosome"/>
</dbReference>
<dbReference type="GO" id="GO:0005576">
    <property type="term" value="C:extracellular region"/>
    <property type="evidence" value="ECO:0007005"/>
    <property type="project" value="MTBBASE"/>
</dbReference>
<dbReference type="GO" id="GO:0005886">
    <property type="term" value="C:plasma membrane"/>
    <property type="evidence" value="ECO:0000318"/>
    <property type="project" value="GO_Central"/>
</dbReference>
<dbReference type="GO" id="GO:0005524">
    <property type="term" value="F:ATP binding"/>
    <property type="evidence" value="ECO:0007669"/>
    <property type="project" value="UniProtKB-KW"/>
</dbReference>
<dbReference type="GO" id="GO:0009927">
    <property type="term" value="F:histidine phosphotransfer kinase activity"/>
    <property type="evidence" value="ECO:0000318"/>
    <property type="project" value="GO_Central"/>
</dbReference>
<dbReference type="GO" id="GO:0000155">
    <property type="term" value="F:phosphorelay sensor kinase activity"/>
    <property type="evidence" value="ECO:0000314"/>
    <property type="project" value="UniProtKB"/>
</dbReference>
<dbReference type="GO" id="GO:1990748">
    <property type="term" value="P:cellular detoxification"/>
    <property type="evidence" value="ECO:0000315"/>
    <property type="project" value="MTBBASE"/>
</dbReference>
<dbReference type="GO" id="GO:0000160">
    <property type="term" value="P:phosphorelay signal transduction system"/>
    <property type="evidence" value="ECO:0000314"/>
    <property type="project" value="UniProtKB"/>
</dbReference>
<dbReference type="CDD" id="cd00082">
    <property type="entry name" value="HisKA"/>
    <property type="match status" value="1"/>
</dbReference>
<dbReference type="FunFam" id="1.10.287.130:FF:000008">
    <property type="entry name" value="Two-component sensor histidine kinase"/>
    <property type="match status" value="1"/>
</dbReference>
<dbReference type="FunFam" id="3.30.565.10:FF:000045">
    <property type="entry name" value="Two-component sensor histidine kinase"/>
    <property type="match status" value="1"/>
</dbReference>
<dbReference type="Gene3D" id="1.10.287.130">
    <property type="match status" value="1"/>
</dbReference>
<dbReference type="Gene3D" id="3.30.565.10">
    <property type="entry name" value="Histidine kinase-like ATPase, C-terminal domain"/>
    <property type="match status" value="1"/>
</dbReference>
<dbReference type="InterPro" id="IPR050351">
    <property type="entry name" value="2-comp_sensor_kinase"/>
</dbReference>
<dbReference type="InterPro" id="IPR036890">
    <property type="entry name" value="HATPase_C_sf"/>
</dbReference>
<dbReference type="InterPro" id="IPR005467">
    <property type="entry name" value="His_kinase_dom"/>
</dbReference>
<dbReference type="InterPro" id="IPR003661">
    <property type="entry name" value="HisK_dim/P_dom"/>
</dbReference>
<dbReference type="InterPro" id="IPR036097">
    <property type="entry name" value="HisK_dim/P_sf"/>
</dbReference>
<dbReference type="InterPro" id="IPR004358">
    <property type="entry name" value="Sig_transdc_His_kin-like_C"/>
</dbReference>
<dbReference type="PANTHER" id="PTHR45453">
    <property type="entry name" value="PHOSPHATE REGULON SENSOR PROTEIN PHOR"/>
    <property type="match status" value="1"/>
</dbReference>
<dbReference type="PANTHER" id="PTHR45453:SF1">
    <property type="entry name" value="PHOSPHATE REGULON SENSOR PROTEIN PHOR"/>
    <property type="match status" value="1"/>
</dbReference>
<dbReference type="Pfam" id="PF02518">
    <property type="entry name" value="HATPase_c"/>
    <property type="match status" value="1"/>
</dbReference>
<dbReference type="Pfam" id="PF00512">
    <property type="entry name" value="HisKA"/>
    <property type="match status" value="1"/>
</dbReference>
<dbReference type="PRINTS" id="PR00344">
    <property type="entry name" value="BCTRLSENSOR"/>
</dbReference>
<dbReference type="SMART" id="SM00387">
    <property type="entry name" value="HATPase_c"/>
    <property type="match status" value="1"/>
</dbReference>
<dbReference type="SMART" id="SM00388">
    <property type="entry name" value="HisKA"/>
    <property type="match status" value="1"/>
</dbReference>
<dbReference type="SUPFAM" id="SSF55874">
    <property type="entry name" value="ATPase domain of HSP90 chaperone/DNA topoisomerase II/histidine kinase"/>
    <property type="match status" value="1"/>
</dbReference>
<dbReference type="SUPFAM" id="SSF47384">
    <property type="entry name" value="Homodimeric domain of signal transducing histidine kinase"/>
    <property type="match status" value="1"/>
</dbReference>
<dbReference type="PROSITE" id="PS50109">
    <property type="entry name" value="HIS_KIN"/>
    <property type="match status" value="1"/>
</dbReference>
<keyword id="KW-0067">ATP-binding</keyword>
<keyword id="KW-1003">Cell membrane</keyword>
<keyword id="KW-0418">Kinase</keyword>
<keyword id="KW-0472">Membrane</keyword>
<keyword id="KW-0547">Nucleotide-binding</keyword>
<keyword id="KW-0597">Phosphoprotein</keyword>
<keyword id="KW-1185">Reference proteome</keyword>
<keyword id="KW-0346">Stress response</keyword>
<keyword id="KW-0808">Transferase</keyword>
<keyword id="KW-0812">Transmembrane</keyword>
<keyword id="KW-1133">Transmembrane helix</keyword>
<keyword id="KW-0902">Two-component regulatory system</keyword>
<keyword id="KW-0843">Virulence</keyword>